<accession>A9M0U6</accession>
<feature type="chain" id="PRO_1000075915" description="2-C-methyl-D-erythritol 2,4-cyclodiphosphate synthase">
    <location>
        <begin position="1"/>
        <end position="160"/>
    </location>
</feature>
<feature type="binding site" evidence="1">
    <location>
        <begin position="11"/>
        <end position="13"/>
    </location>
    <ligand>
        <name>4-CDP-2-C-methyl-D-erythritol 2-phosphate</name>
        <dbReference type="ChEBI" id="CHEBI:57919"/>
    </ligand>
</feature>
<feature type="binding site" evidence="1">
    <location>
        <position position="11"/>
    </location>
    <ligand>
        <name>a divalent metal cation</name>
        <dbReference type="ChEBI" id="CHEBI:60240"/>
    </ligand>
</feature>
<feature type="binding site" evidence="1">
    <location>
        <position position="13"/>
    </location>
    <ligand>
        <name>a divalent metal cation</name>
        <dbReference type="ChEBI" id="CHEBI:60240"/>
    </ligand>
</feature>
<feature type="binding site" evidence="1">
    <location>
        <begin position="37"/>
        <end position="38"/>
    </location>
    <ligand>
        <name>4-CDP-2-C-methyl-D-erythritol 2-phosphate</name>
        <dbReference type="ChEBI" id="CHEBI:57919"/>
    </ligand>
</feature>
<feature type="binding site" evidence="1">
    <location>
        <position position="45"/>
    </location>
    <ligand>
        <name>a divalent metal cation</name>
        <dbReference type="ChEBI" id="CHEBI:60240"/>
    </ligand>
</feature>
<feature type="binding site" evidence="1">
    <location>
        <begin position="59"/>
        <end position="61"/>
    </location>
    <ligand>
        <name>4-CDP-2-C-methyl-D-erythritol 2-phosphate</name>
        <dbReference type="ChEBI" id="CHEBI:57919"/>
    </ligand>
</feature>
<feature type="binding site" evidence="1">
    <location>
        <position position="145"/>
    </location>
    <ligand>
        <name>4-CDP-2-C-methyl-D-erythritol 2-phosphate</name>
        <dbReference type="ChEBI" id="CHEBI:57919"/>
    </ligand>
</feature>
<feature type="site" description="Transition state stabilizer" evidence="1">
    <location>
        <position position="37"/>
    </location>
</feature>
<feature type="site" description="Transition state stabilizer" evidence="1">
    <location>
        <position position="136"/>
    </location>
</feature>
<gene>
    <name evidence="1" type="primary">ispF</name>
    <name type="ordered locus">NMCC_1417</name>
</gene>
<evidence type="ECO:0000255" key="1">
    <source>
        <dbReference type="HAMAP-Rule" id="MF_00107"/>
    </source>
</evidence>
<reference key="1">
    <citation type="journal article" date="2008" name="Genomics">
        <title>Characterization of ST-4821 complex, a unique Neisseria meningitidis clone.</title>
        <authorList>
            <person name="Peng J."/>
            <person name="Yang L."/>
            <person name="Yang F."/>
            <person name="Yang J."/>
            <person name="Yan Y."/>
            <person name="Nie H."/>
            <person name="Zhang X."/>
            <person name="Xiong Z."/>
            <person name="Jiang Y."/>
            <person name="Cheng F."/>
            <person name="Xu X."/>
            <person name="Chen S."/>
            <person name="Sun L."/>
            <person name="Li W."/>
            <person name="Shen Y."/>
            <person name="Shao Z."/>
            <person name="Liang X."/>
            <person name="Xu J."/>
            <person name="Jin Q."/>
        </authorList>
    </citation>
    <scope>NUCLEOTIDE SEQUENCE [LARGE SCALE GENOMIC DNA]</scope>
    <source>
        <strain>053442</strain>
    </source>
</reference>
<sequence length="160" mass="17020">MTNIRIGQGYDVHQLTEGRKLILGGVEIPFEKGLLGHSDADALLHAVTDALLGAAGLGDIGSHFPDTAAEFKDADSRVLLRAAYQSVQAQGWQAVNVDTTVIAQKPKLAPHIPQMRANIAADLGIDISCVNIKGKTNEKLGYLGRMEGIEAQAAVLLVRI</sequence>
<organism>
    <name type="scientific">Neisseria meningitidis serogroup C (strain 053442)</name>
    <dbReference type="NCBI Taxonomy" id="374833"/>
    <lineage>
        <taxon>Bacteria</taxon>
        <taxon>Pseudomonadati</taxon>
        <taxon>Pseudomonadota</taxon>
        <taxon>Betaproteobacteria</taxon>
        <taxon>Neisseriales</taxon>
        <taxon>Neisseriaceae</taxon>
        <taxon>Neisseria</taxon>
    </lineage>
</organism>
<proteinExistence type="inferred from homology"/>
<protein>
    <recommendedName>
        <fullName evidence="1">2-C-methyl-D-erythritol 2,4-cyclodiphosphate synthase</fullName>
        <shortName evidence="1">MECDP-synthase</shortName>
        <shortName evidence="1">MECPP-synthase</shortName>
        <shortName evidence="1">MECPS</shortName>
        <ecNumber evidence="1">4.6.1.12</ecNumber>
    </recommendedName>
</protein>
<dbReference type="EC" id="4.6.1.12" evidence="1"/>
<dbReference type="EMBL" id="CP000381">
    <property type="protein sequence ID" value="ABX73586.1"/>
    <property type="molecule type" value="Genomic_DNA"/>
</dbReference>
<dbReference type="RefSeq" id="WP_002218386.1">
    <property type="nucleotide sequence ID" value="NC_010120.1"/>
</dbReference>
<dbReference type="SMR" id="A9M0U6"/>
<dbReference type="GeneID" id="86876398"/>
<dbReference type="KEGG" id="nmn:NMCC_1417"/>
<dbReference type="HOGENOM" id="CLU_084630_2_0_4"/>
<dbReference type="UniPathway" id="UPA00056">
    <property type="reaction ID" value="UER00095"/>
</dbReference>
<dbReference type="Proteomes" id="UP000001177">
    <property type="component" value="Chromosome"/>
</dbReference>
<dbReference type="GO" id="GO:0008685">
    <property type="term" value="F:2-C-methyl-D-erythritol 2,4-cyclodiphosphate synthase activity"/>
    <property type="evidence" value="ECO:0007669"/>
    <property type="project" value="UniProtKB-UniRule"/>
</dbReference>
<dbReference type="GO" id="GO:0046872">
    <property type="term" value="F:metal ion binding"/>
    <property type="evidence" value="ECO:0007669"/>
    <property type="project" value="UniProtKB-KW"/>
</dbReference>
<dbReference type="GO" id="GO:0019288">
    <property type="term" value="P:isopentenyl diphosphate biosynthetic process, methylerythritol 4-phosphate pathway"/>
    <property type="evidence" value="ECO:0007669"/>
    <property type="project" value="UniProtKB-UniRule"/>
</dbReference>
<dbReference type="GO" id="GO:0016114">
    <property type="term" value="P:terpenoid biosynthetic process"/>
    <property type="evidence" value="ECO:0007669"/>
    <property type="project" value="InterPro"/>
</dbReference>
<dbReference type="CDD" id="cd00554">
    <property type="entry name" value="MECDP_synthase"/>
    <property type="match status" value="1"/>
</dbReference>
<dbReference type="FunFam" id="3.30.1330.50:FF:000001">
    <property type="entry name" value="2-C-methyl-D-erythritol 2,4-cyclodiphosphate synthase"/>
    <property type="match status" value="1"/>
</dbReference>
<dbReference type="Gene3D" id="3.30.1330.50">
    <property type="entry name" value="2-C-methyl-D-erythritol 2,4-cyclodiphosphate synthase"/>
    <property type="match status" value="1"/>
</dbReference>
<dbReference type="HAMAP" id="MF_00107">
    <property type="entry name" value="IspF"/>
    <property type="match status" value="1"/>
</dbReference>
<dbReference type="InterPro" id="IPR003526">
    <property type="entry name" value="MECDP_synthase"/>
</dbReference>
<dbReference type="InterPro" id="IPR020555">
    <property type="entry name" value="MECDP_synthase_CS"/>
</dbReference>
<dbReference type="InterPro" id="IPR036571">
    <property type="entry name" value="MECDP_synthase_sf"/>
</dbReference>
<dbReference type="NCBIfam" id="TIGR00151">
    <property type="entry name" value="ispF"/>
    <property type="match status" value="1"/>
</dbReference>
<dbReference type="PANTHER" id="PTHR43181">
    <property type="entry name" value="2-C-METHYL-D-ERYTHRITOL 2,4-CYCLODIPHOSPHATE SYNTHASE, CHLOROPLASTIC"/>
    <property type="match status" value="1"/>
</dbReference>
<dbReference type="PANTHER" id="PTHR43181:SF1">
    <property type="entry name" value="2-C-METHYL-D-ERYTHRITOL 2,4-CYCLODIPHOSPHATE SYNTHASE, CHLOROPLASTIC"/>
    <property type="match status" value="1"/>
</dbReference>
<dbReference type="Pfam" id="PF02542">
    <property type="entry name" value="YgbB"/>
    <property type="match status" value="1"/>
</dbReference>
<dbReference type="SUPFAM" id="SSF69765">
    <property type="entry name" value="IpsF-like"/>
    <property type="match status" value="1"/>
</dbReference>
<dbReference type="PROSITE" id="PS01350">
    <property type="entry name" value="ISPF"/>
    <property type="match status" value="1"/>
</dbReference>
<name>ISPF_NEIM0</name>
<keyword id="KW-0414">Isoprene biosynthesis</keyword>
<keyword id="KW-0456">Lyase</keyword>
<keyword id="KW-0479">Metal-binding</keyword>
<comment type="function">
    <text evidence="1">Involved in the biosynthesis of isopentenyl diphosphate (IPP) and dimethylallyl diphosphate (DMAPP), two major building blocks of isoprenoid compounds. Catalyzes the conversion of 4-diphosphocytidyl-2-C-methyl-D-erythritol 2-phosphate (CDP-ME2P) to 2-C-methyl-D-erythritol 2,4-cyclodiphosphate (ME-CPP) with a corresponding release of cytidine 5-monophosphate (CMP).</text>
</comment>
<comment type="catalytic activity">
    <reaction evidence="1">
        <text>4-CDP-2-C-methyl-D-erythritol 2-phosphate = 2-C-methyl-D-erythritol 2,4-cyclic diphosphate + CMP</text>
        <dbReference type="Rhea" id="RHEA:23864"/>
        <dbReference type="ChEBI" id="CHEBI:57919"/>
        <dbReference type="ChEBI" id="CHEBI:58483"/>
        <dbReference type="ChEBI" id="CHEBI:60377"/>
        <dbReference type="EC" id="4.6.1.12"/>
    </reaction>
</comment>
<comment type="cofactor">
    <cofactor evidence="1">
        <name>a divalent metal cation</name>
        <dbReference type="ChEBI" id="CHEBI:60240"/>
    </cofactor>
    <text evidence="1">Binds 1 divalent metal cation per subunit.</text>
</comment>
<comment type="pathway">
    <text evidence="1">Isoprenoid biosynthesis; isopentenyl diphosphate biosynthesis via DXP pathway; isopentenyl diphosphate from 1-deoxy-D-xylulose 5-phosphate: step 4/6.</text>
</comment>
<comment type="subunit">
    <text evidence="1">Homotrimer.</text>
</comment>
<comment type="similarity">
    <text evidence="1">Belongs to the IspF family.</text>
</comment>